<reference key="1">
    <citation type="journal article" date="2000" name="Nature">
        <title>DNA sequence of both chromosomes of the cholera pathogen Vibrio cholerae.</title>
        <authorList>
            <person name="Heidelberg J.F."/>
            <person name="Eisen J.A."/>
            <person name="Nelson W.C."/>
            <person name="Clayton R.A."/>
            <person name="Gwinn M.L."/>
            <person name="Dodson R.J."/>
            <person name="Haft D.H."/>
            <person name="Hickey E.K."/>
            <person name="Peterson J.D."/>
            <person name="Umayam L.A."/>
            <person name="Gill S.R."/>
            <person name="Nelson K.E."/>
            <person name="Read T.D."/>
            <person name="Tettelin H."/>
            <person name="Richardson D.L."/>
            <person name="Ermolaeva M.D."/>
            <person name="Vamathevan J.J."/>
            <person name="Bass S."/>
            <person name="Qin H."/>
            <person name="Dragoi I."/>
            <person name="Sellers P."/>
            <person name="McDonald L.A."/>
            <person name="Utterback T.R."/>
            <person name="Fleischmann R.D."/>
            <person name="Nierman W.C."/>
            <person name="White O."/>
            <person name="Salzberg S.L."/>
            <person name="Smith H.O."/>
            <person name="Colwell R.R."/>
            <person name="Mekalanos J.J."/>
            <person name="Venter J.C."/>
            <person name="Fraser C.M."/>
        </authorList>
    </citation>
    <scope>NUCLEOTIDE SEQUENCE [LARGE SCALE GENOMIC DNA]</scope>
    <source>
        <strain>ATCC 39315 / El Tor Inaba N16961</strain>
    </source>
</reference>
<reference key="2">
    <citation type="journal article" date="2003" name="J. Biol. Chem.">
        <title>Purification and characterization of three members of the photolyase/cryptochrome family blue-light photoreceptors from Vibrio cholerae.</title>
        <authorList>
            <person name="Worthington E.N."/>
            <person name="Kavakli I.H."/>
            <person name="Berrocal-Tito G."/>
            <person name="Bondo B.E."/>
            <person name="Sancar A."/>
        </authorList>
    </citation>
    <scope>CHARACTERIZATION</scope>
    <scope>COFACTOR</scope>
    <scope>PHOTOLYASE ACTIVITY</scope>
</reference>
<accession>Q9KNA8</accession>
<protein>
    <recommendedName>
        <fullName>Deoxyribodipyrimidine photo-lyase</fullName>
        <ecNumber>4.1.99.3</ecNumber>
    </recommendedName>
    <alternativeName>
        <fullName>DNA photolyase</fullName>
    </alternativeName>
    <alternativeName>
        <fullName>Photoreactivating enzyme</fullName>
    </alternativeName>
</protein>
<dbReference type="EC" id="4.1.99.3"/>
<dbReference type="EMBL" id="AE003853">
    <property type="protein sequence ID" value="AAF95971.1"/>
    <property type="molecule type" value="Genomic_DNA"/>
</dbReference>
<dbReference type="PIR" id="G82505">
    <property type="entry name" value="G82505"/>
</dbReference>
<dbReference type="RefSeq" id="NP_232458.1">
    <property type="nucleotide sequence ID" value="NC_002506.1"/>
</dbReference>
<dbReference type="SMR" id="Q9KNA8"/>
<dbReference type="STRING" id="243277.VC_A0057"/>
<dbReference type="DNASU" id="2612142"/>
<dbReference type="EnsemblBacteria" id="AAF95971">
    <property type="protein sequence ID" value="AAF95971"/>
    <property type="gene ID" value="VC_A0057"/>
</dbReference>
<dbReference type="KEGG" id="vch:VC_A0057"/>
<dbReference type="PATRIC" id="fig|243277.26.peg.2702"/>
<dbReference type="eggNOG" id="COG0415">
    <property type="taxonomic scope" value="Bacteria"/>
</dbReference>
<dbReference type="HOGENOM" id="CLU_010348_2_0_6"/>
<dbReference type="BRENDA" id="4.1.99.3">
    <property type="organism ID" value="15862"/>
</dbReference>
<dbReference type="Proteomes" id="UP000000584">
    <property type="component" value="Chromosome 2"/>
</dbReference>
<dbReference type="GO" id="GO:0003904">
    <property type="term" value="F:deoxyribodipyrimidine photo-lyase activity"/>
    <property type="evidence" value="ECO:0000318"/>
    <property type="project" value="GO_Central"/>
</dbReference>
<dbReference type="GO" id="GO:0003677">
    <property type="term" value="F:DNA binding"/>
    <property type="evidence" value="ECO:0000318"/>
    <property type="project" value="GO_Central"/>
</dbReference>
<dbReference type="GO" id="GO:0071949">
    <property type="term" value="F:FAD binding"/>
    <property type="evidence" value="ECO:0000318"/>
    <property type="project" value="GO_Central"/>
</dbReference>
<dbReference type="GO" id="GO:0006281">
    <property type="term" value="P:DNA repair"/>
    <property type="evidence" value="ECO:0007669"/>
    <property type="project" value="UniProtKB-KW"/>
</dbReference>
<dbReference type="GO" id="GO:0009416">
    <property type="term" value="P:response to light stimulus"/>
    <property type="evidence" value="ECO:0000318"/>
    <property type="project" value="GO_Central"/>
</dbReference>
<dbReference type="FunFam" id="1.10.579.10:FF:000003">
    <property type="entry name" value="Deoxyribodipyrimidine photo-lyase"/>
    <property type="match status" value="1"/>
</dbReference>
<dbReference type="Gene3D" id="1.25.40.80">
    <property type="match status" value="1"/>
</dbReference>
<dbReference type="Gene3D" id="1.10.579.10">
    <property type="entry name" value="DNA Cyclobutane Dipyrimidine Photolyase, subunit A, domain 3"/>
    <property type="match status" value="1"/>
</dbReference>
<dbReference type="Gene3D" id="3.40.50.620">
    <property type="entry name" value="HUPs"/>
    <property type="match status" value="1"/>
</dbReference>
<dbReference type="InterPro" id="IPR036134">
    <property type="entry name" value="Crypto/Photolyase_FAD-like_sf"/>
</dbReference>
<dbReference type="InterPro" id="IPR036155">
    <property type="entry name" value="Crypto/Photolyase_N_sf"/>
</dbReference>
<dbReference type="InterPro" id="IPR005101">
    <property type="entry name" value="Cryptochr/Photolyase_FAD-bd"/>
</dbReference>
<dbReference type="InterPro" id="IPR002081">
    <property type="entry name" value="Cryptochrome/DNA_photolyase_1"/>
</dbReference>
<dbReference type="InterPro" id="IPR018394">
    <property type="entry name" value="DNA_photolyase_1_CS_C"/>
</dbReference>
<dbReference type="InterPro" id="IPR006050">
    <property type="entry name" value="DNA_photolyase_N"/>
</dbReference>
<dbReference type="InterPro" id="IPR014729">
    <property type="entry name" value="Rossmann-like_a/b/a_fold"/>
</dbReference>
<dbReference type="NCBIfam" id="NF007955">
    <property type="entry name" value="PRK10674.1"/>
    <property type="match status" value="1"/>
</dbReference>
<dbReference type="PANTHER" id="PTHR11455">
    <property type="entry name" value="CRYPTOCHROME"/>
    <property type="match status" value="1"/>
</dbReference>
<dbReference type="PANTHER" id="PTHR11455:SF9">
    <property type="entry name" value="CRYPTOCHROME CIRCADIAN CLOCK 5 ISOFORM X1"/>
    <property type="match status" value="1"/>
</dbReference>
<dbReference type="Pfam" id="PF00875">
    <property type="entry name" value="DNA_photolyase"/>
    <property type="match status" value="1"/>
</dbReference>
<dbReference type="Pfam" id="PF03441">
    <property type="entry name" value="FAD_binding_7"/>
    <property type="match status" value="1"/>
</dbReference>
<dbReference type="PRINTS" id="PR00147">
    <property type="entry name" value="DNAPHOTLYASE"/>
</dbReference>
<dbReference type="SUPFAM" id="SSF48173">
    <property type="entry name" value="Cryptochrome/photolyase FAD-binding domain"/>
    <property type="match status" value="1"/>
</dbReference>
<dbReference type="SUPFAM" id="SSF52425">
    <property type="entry name" value="Cryptochrome/photolyase, N-terminal domain"/>
    <property type="match status" value="1"/>
</dbReference>
<dbReference type="PROSITE" id="PS00394">
    <property type="entry name" value="DNA_PHOTOLYASES_1_1"/>
    <property type="match status" value="1"/>
</dbReference>
<dbReference type="PROSITE" id="PS00691">
    <property type="entry name" value="DNA_PHOTOLYASES_1_2"/>
    <property type="match status" value="1"/>
</dbReference>
<dbReference type="PROSITE" id="PS51645">
    <property type="entry name" value="PHR_CRY_ALPHA_BETA"/>
    <property type="match status" value="1"/>
</dbReference>
<name>PHR_VIBCH</name>
<keyword id="KW-0157">Chromophore</keyword>
<keyword id="KW-0227">DNA damage</keyword>
<keyword id="KW-0234">DNA repair</keyword>
<keyword id="KW-0238">DNA-binding</keyword>
<keyword id="KW-0274">FAD</keyword>
<keyword id="KW-0285">Flavoprotein</keyword>
<keyword id="KW-0456">Lyase</keyword>
<keyword id="KW-1185">Reference proteome</keyword>
<evidence type="ECO:0000250" key="1"/>
<evidence type="ECO:0000250" key="2">
    <source>
        <dbReference type="UniProtKB" id="P00914"/>
    </source>
</evidence>
<evidence type="ECO:0000269" key="3">
    <source>
    </source>
</evidence>
<evidence type="ECO:0000305" key="4"/>
<organism>
    <name type="scientific">Vibrio cholerae serotype O1 (strain ATCC 39315 / El Tor Inaba N16961)</name>
    <dbReference type="NCBI Taxonomy" id="243277"/>
    <lineage>
        <taxon>Bacteria</taxon>
        <taxon>Pseudomonadati</taxon>
        <taxon>Pseudomonadota</taxon>
        <taxon>Gammaproteobacteria</taxon>
        <taxon>Vibrionales</taxon>
        <taxon>Vibrionaceae</taxon>
        <taxon>Vibrio</taxon>
    </lineage>
</organism>
<feature type="chain" id="PRO_0000235307" description="Deoxyribodipyrimidine photo-lyase">
    <location>
        <begin position="1"/>
        <end position="469"/>
    </location>
</feature>
<feature type="domain" description="Photolyase/cryptochrome alpha/beta">
    <location>
        <begin position="1"/>
        <end position="133"/>
    </location>
</feature>
<feature type="binding site" evidence="2">
    <location>
        <position position="107"/>
    </location>
    <ligand>
        <name>(6R)-5,10-methylene-5,6,7,8-tetrahydrofolate</name>
        <dbReference type="ChEBI" id="CHEBI:15636"/>
    </ligand>
</feature>
<proteinExistence type="evidence at protein level"/>
<comment type="function">
    <text>Involved in repair of UV radiation-induced DNA damage. Catalyzes the light-dependent monomerization (300-600 nm) of cyclobutyl pyrimidine dimers (in cis-syn configuration), which are formed between adjacent bases on the same DNA strand upon exposure to ultraviolet radiation.</text>
</comment>
<comment type="catalytic activity">
    <reaction>
        <text>cyclobutadipyrimidine (in DNA) = 2 pyrimidine residues (in DNA).</text>
        <dbReference type="EC" id="4.1.99.3"/>
    </reaction>
</comment>
<comment type="cofactor">
    <cofactor evidence="3">
        <name>FAD</name>
        <dbReference type="ChEBI" id="CHEBI:57692"/>
    </cofactor>
    <text evidence="3">Binds 1 FAD per subunit.</text>
</comment>
<comment type="cofactor">
    <cofactor evidence="3">
        <name>(6R)-5,10-methylene-5,6,7,8-tetrahydrofolate</name>
        <dbReference type="ChEBI" id="CHEBI:15636"/>
    </cofactor>
    <text evidence="3">Binds 1 5,10-methenyltetrahydrofolate (MTHF) non-covalently per subunit. The occupancy is 0.2. Usually had equal molar flavin and folate.</text>
</comment>
<comment type="subunit">
    <text evidence="1">Monomer.</text>
</comment>
<comment type="similarity">
    <text evidence="4">Belongs to the DNA photolyase class-1 family.</text>
</comment>
<gene>
    <name type="primary">phrA</name>
    <name type="synonym">VcPhr</name>
    <name type="ordered locus">VC_A0057</name>
</gene>
<sequence length="469" mass="54360">MRLVWFRRDLRSFDNTALTAALNSGDPVAAMYIATPEQWHQHHLAPIQADLIWRRLAELQQELAALNVPLFYQQVADFQAAAVAVSQLAKTLNATQVLANRDYELDEQQRDQLAQQLLSEQGIIWSAFDDKCVLPPGSVRTKQGEFFKVFTPFKRAWLTLFQPPVIGKNRPVALWNVPSALAELVWHPEQAFDYPRIDSTPWAADFETVRAQLRDFCRERVQDYHQARDFPAREGTSSLSPYLAIGVLSARQCVARLYHESSMGELSEGAQVWLSELIWREFYQHLVAIEPNLSKSRDFVEWGARLEWWNDNEKFQLWCEGKTGYPIVDAAMRQLNQTGWMHNRLRMIVASFLTKDLHIDWRWGERYFMSRLIDGDYAANNGGWQWCASTGCDGQPYFRIFNPVSQGEKFDPNGDFIRRWVPELRSVSSAYIHQPWTYPAVNSVLYPARLVDHKQEREVTLRLYKTAKG</sequence>